<accession>P22798</accession>
<accession>A0A0K9QHT0</accession>
<reference key="1">
    <citation type="journal article" date="2014" name="Nature">
        <title>The genome of the recently domesticated crop plant sugar beet (Beta vulgaris).</title>
        <authorList>
            <person name="Dohm J.C."/>
            <person name="Minoche A.E."/>
            <person name="Holtgraewe D."/>
            <person name="Capella-Gutierrez S."/>
            <person name="Zakrzewski F."/>
            <person name="Tafer H."/>
            <person name="Rupp O."/>
            <person name="Soerensen T.R."/>
            <person name="Stracke R."/>
            <person name="Reinhardt R."/>
            <person name="Goesmann A."/>
            <person name="Kraft T."/>
            <person name="Schulz B."/>
            <person name="Stadler P.F."/>
            <person name="Schmidt T."/>
            <person name="Gabaldon T."/>
            <person name="Lehrach H."/>
            <person name="Weisshaar B."/>
            <person name="Himmelbauer H."/>
        </authorList>
    </citation>
    <scope>NUCLEOTIDE SEQUENCE [LARGE SCALE GENOMIC DNA]</scope>
    <source>
        <strain>cv. Viroflay</strain>
        <tissue>Leaf</tissue>
    </source>
</reference>
<reference key="2">
    <citation type="journal article" date="1991" name="FEBS Lett.">
        <title>Chloroplast ribosomal protein L15, like L1, L13 and L21, is significantly larger than its E. coli homologue.</title>
        <authorList>
            <person name="Johnson C.H."/>
            <person name="Subramanian A.R."/>
        </authorList>
    </citation>
    <scope>PROTEIN SEQUENCE OF 62-91; 122-141; 157-171; 185-199 AND 249-259</scope>
    <source>
        <strain>cv. Alwaro</strain>
    </source>
</reference>
<reference key="3">
    <citation type="journal article" date="2000" name="J. Biol. Chem.">
        <title>The plastid ribosomal proteins. Identification of all the proteins in the 50S subunit of an organelle ribosome (chloroplast).</title>
        <authorList>
            <person name="Yamaguchi K."/>
            <person name="Subramanian A.R."/>
        </authorList>
    </citation>
    <scope>PROTEIN SEQUENCE OF 62-67</scope>
    <scope>SUBUNIT</scope>
    <scope>SUBCELLULAR LOCATION</scope>
    <scope>MASS SPECTROMETRY</scope>
    <source>
        <strain>cv. Alwaro</strain>
        <tissue>Leaf</tissue>
    </source>
</reference>
<reference key="4">
    <citation type="journal article" date="2007" name="Proc. Natl. Acad. Sci. U.S.A.">
        <title>Cryo-EM study of the spinach chloroplast ribosome reveals the structural and functional roles of plastid-specific ribosomal proteins.</title>
        <authorList>
            <person name="Sharma M.R."/>
            <person name="Wilson D.N."/>
            <person name="Datta P.P."/>
            <person name="Barat C."/>
            <person name="Schluenzen F."/>
            <person name="Fucini P."/>
            <person name="Agrawal R.K."/>
        </authorList>
    </citation>
    <scope>STRUCTURE BY ELECTRON MICROSCOPY (9.40 ANGSTROMS)</scope>
</reference>
<reference key="5">
    <citation type="journal article" date="2016" name="Sci. Rep.">
        <title>Cryo-EM structure of the large subunit of the spinach chloroplast ribosome.</title>
        <authorList>
            <person name="Ahmed T."/>
            <person name="Yin Z."/>
            <person name="Bhushan S."/>
        </authorList>
    </citation>
    <scope>STRUCTURE BY ELECTRON MICROSCOPY (3.50 ANGSTROMS)</scope>
</reference>
<reference key="6">
    <citation type="journal article" date="2017" name="EMBO J.">
        <title>The complete structure of the chloroplast 70S ribosome in complex with translation factor pY.</title>
        <authorList>
            <person name="Bieri P."/>
            <person name="Leibundgut M."/>
            <person name="Saurer M."/>
            <person name="Boehringer D."/>
            <person name="Ban N."/>
        </authorList>
    </citation>
    <scope>STRUCTURE BY ELECTRON MICROSCOPY (3.25 ANGSTROMS)</scope>
    <scope>SUBUNIT</scope>
    <scope>SUBCELLULAR LOCATION</scope>
</reference>
<organism>
    <name type="scientific">Spinacia oleracea</name>
    <name type="common">Spinach</name>
    <dbReference type="NCBI Taxonomy" id="3562"/>
    <lineage>
        <taxon>Eukaryota</taxon>
        <taxon>Viridiplantae</taxon>
        <taxon>Streptophyta</taxon>
        <taxon>Embryophyta</taxon>
        <taxon>Tracheophyta</taxon>
        <taxon>Spermatophyta</taxon>
        <taxon>Magnoliopsida</taxon>
        <taxon>eudicotyledons</taxon>
        <taxon>Gunneridae</taxon>
        <taxon>Pentapetalae</taxon>
        <taxon>Caryophyllales</taxon>
        <taxon>Chenopodiaceae</taxon>
        <taxon>Chenopodioideae</taxon>
        <taxon>Anserineae</taxon>
        <taxon>Spinacia</taxon>
    </lineage>
</organism>
<keyword id="KW-0002">3D-structure</keyword>
<keyword id="KW-0150">Chloroplast</keyword>
<keyword id="KW-0903">Direct protein sequencing</keyword>
<keyword id="KW-0934">Plastid</keyword>
<keyword id="KW-1185">Reference proteome</keyword>
<keyword id="KW-0687">Ribonucleoprotein</keyword>
<keyword id="KW-0689">Ribosomal protein</keyword>
<keyword id="KW-0809">Transit peptide</keyword>
<comment type="function">
    <text evidence="7 8">Component of the chloroplast ribosome (chloro-ribosome), a dedicated translation machinery responsible for the synthesis of chloroplast genome-encoded proteins, including proteins of the transcription and translation machinery and components of the photosynthetic apparatus.</text>
</comment>
<comment type="subunit">
    <text evidence="2 3">Component of the chloroplast large ribosomal subunit (LSU). Mature 70S chloroplast ribosomes of higher plants consist of a small (30S) and a large (50S) subunit. The 30S small subunit contains 1 molecule of ribosomal RNA (16S rRNA) and 24 different proteins. The 50S large subunit contains 3 rRNA molecules (23S, 5S and 4.5S rRNA) and 33 different proteins.</text>
</comment>
<comment type="subcellular location">
    <subcellularLocation>
        <location evidence="2 3">Plastid</location>
        <location evidence="2 3">Chloroplast</location>
    </subcellularLocation>
</comment>
<comment type="mass spectrometry"/>
<comment type="similarity">
    <text evidence="6">Belongs to the universal ribosomal protein uL15 family.</text>
</comment>
<name>RK15_SPIOL</name>
<sequence>MASLLSLSSTPPSTANSNNYPSSTFKGNINNFRINPFNFAPLKLHLRNIVKKESTRLVVVASASSSNVSPSIGSGSETRFRLDNLGPQPGSRKKGKRKGRGHAAGQGGSCGFGMRGQKSRSGPGIMRGFEGGQMPLYRRIPKLRGIAGGMRAGLPKYVPINLRDIEVAGFKEGEEVSLESLKAKGIINPSGRERRLPLKILGEGELSTKLQIKARAFSGSAKEKLEAAGCSVTVLPGRKKYIKESVRKNLARADEYFAKKRAASASEAESA</sequence>
<protein>
    <recommendedName>
        <fullName evidence="5">Large ribosomal subunit protein uL15c</fullName>
    </recommendedName>
    <alternativeName>
        <fullName evidence="4">50S ribosomal protein L15, chloroplastic</fullName>
    </alternativeName>
    <alternativeName>
        <fullName>CL15</fullName>
    </alternativeName>
</protein>
<gene>
    <name type="primary">RPL15</name>
    <name type="ORF">SOVF_177460</name>
</gene>
<feature type="transit peptide" description="Chloroplast" evidence="2">
    <location>
        <begin position="1"/>
        <end position="61"/>
    </location>
</feature>
<feature type="chain" id="PRO_0000104878" description="Large ribosomal subunit protein uL15c">
    <location>
        <begin position="62"/>
        <end position="271"/>
    </location>
</feature>
<feature type="region of interest" description="Disordered" evidence="1">
    <location>
        <begin position="1"/>
        <end position="21"/>
    </location>
</feature>
<feature type="region of interest" description="Disordered" evidence="1">
    <location>
        <begin position="66"/>
        <end position="120"/>
    </location>
</feature>
<feature type="compositionally biased region" description="Low complexity" evidence="1">
    <location>
        <begin position="66"/>
        <end position="76"/>
    </location>
</feature>
<feature type="compositionally biased region" description="Basic residues" evidence="1">
    <location>
        <begin position="91"/>
        <end position="101"/>
    </location>
</feature>
<feature type="compositionally biased region" description="Gly residues" evidence="1">
    <location>
        <begin position="102"/>
        <end position="114"/>
    </location>
</feature>
<feature type="strand" evidence="10">
    <location>
        <begin position="82"/>
        <end position="84"/>
    </location>
</feature>
<feature type="strand" evidence="11">
    <location>
        <begin position="98"/>
        <end position="100"/>
    </location>
</feature>
<feature type="turn" evidence="10">
    <location>
        <begin position="102"/>
        <end position="104"/>
    </location>
</feature>
<feature type="strand" evidence="9">
    <location>
        <begin position="105"/>
        <end position="107"/>
    </location>
</feature>
<feature type="turn" evidence="9">
    <location>
        <begin position="108"/>
        <end position="111"/>
    </location>
</feature>
<feature type="strand" evidence="11">
    <location>
        <begin position="114"/>
        <end position="116"/>
    </location>
</feature>
<feature type="helix" evidence="10">
    <location>
        <begin position="117"/>
        <end position="119"/>
    </location>
</feature>
<feature type="strand" evidence="10">
    <location>
        <begin position="120"/>
        <end position="122"/>
    </location>
</feature>
<feature type="turn" evidence="10">
    <location>
        <begin position="136"/>
        <end position="138"/>
    </location>
</feature>
<feature type="strand" evidence="9">
    <location>
        <begin position="143"/>
        <end position="145"/>
    </location>
</feature>
<feature type="helix" evidence="10">
    <location>
        <begin position="146"/>
        <end position="148"/>
    </location>
</feature>
<feature type="strand" evidence="10">
    <location>
        <begin position="157"/>
        <end position="161"/>
    </location>
</feature>
<feature type="helix" evidence="10">
    <location>
        <begin position="162"/>
        <end position="167"/>
    </location>
</feature>
<feature type="strand" evidence="9">
    <location>
        <begin position="172"/>
        <end position="174"/>
    </location>
</feature>
<feature type="strand" evidence="11">
    <location>
        <begin position="175"/>
        <end position="177"/>
    </location>
</feature>
<feature type="helix" evidence="10">
    <location>
        <begin position="179"/>
        <end position="183"/>
    </location>
</feature>
<feature type="strand" evidence="9">
    <location>
        <begin position="185"/>
        <end position="187"/>
    </location>
</feature>
<feature type="helix" evidence="10">
    <location>
        <begin position="191"/>
        <end position="195"/>
    </location>
</feature>
<feature type="strand" evidence="10">
    <location>
        <begin position="198"/>
        <end position="201"/>
    </location>
</feature>
<feature type="strand" evidence="9">
    <location>
        <begin position="202"/>
        <end position="204"/>
    </location>
</feature>
<feature type="strand" evidence="10">
    <location>
        <begin position="211"/>
        <end position="217"/>
    </location>
</feature>
<feature type="helix" evidence="10">
    <location>
        <begin position="219"/>
        <end position="228"/>
    </location>
</feature>
<feature type="strand" evidence="10">
    <location>
        <begin position="231"/>
        <end position="234"/>
    </location>
</feature>
<feature type="helix" evidence="10">
    <location>
        <begin position="244"/>
        <end position="261"/>
    </location>
</feature>
<evidence type="ECO:0000256" key="1">
    <source>
        <dbReference type="SAM" id="MobiDB-lite"/>
    </source>
</evidence>
<evidence type="ECO:0000269" key="2">
    <source>
    </source>
</evidence>
<evidence type="ECO:0000269" key="3">
    <source>
    </source>
</evidence>
<evidence type="ECO:0000303" key="4">
    <source>
    </source>
</evidence>
<evidence type="ECO:0000303" key="5">
    <source>
    </source>
</evidence>
<evidence type="ECO:0000305" key="6"/>
<evidence type="ECO:0000305" key="7">
    <source>
    </source>
</evidence>
<evidence type="ECO:0000305" key="8">
    <source>
    </source>
</evidence>
<evidence type="ECO:0007829" key="9">
    <source>
        <dbReference type="PDB" id="5H1S"/>
    </source>
</evidence>
<evidence type="ECO:0007829" key="10">
    <source>
        <dbReference type="PDB" id="5MMI"/>
    </source>
</evidence>
<evidence type="ECO:0007829" key="11">
    <source>
        <dbReference type="PDB" id="5X8T"/>
    </source>
</evidence>
<dbReference type="EMBL" id="KQ180134">
    <property type="protein sequence ID" value="KNA06817.1"/>
    <property type="molecule type" value="Genomic_DNA"/>
</dbReference>
<dbReference type="PIR" id="S15817">
    <property type="entry name" value="S15817"/>
</dbReference>
<dbReference type="PDB" id="4V61">
    <property type="method" value="EM"/>
    <property type="resolution" value="9.40 A"/>
    <property type="chains" value="N=77-259"/>
</dbReference>
<dbReference type="PDB" id="5H1S">
    <property type="method" value="EM"/>
    <property type="resolution" value="3.50 A"/>
    <property type="chains" value="N=80-271"/>
</dbReference>
<dbReference type="PDB" id="5MLC">
    <property type="method" value="EM"/>
    <property type="resolution" value="3.90 A"/>
    <property type="chains" value="N=1-271"/>
</dbReference>
<dbReference type="PDB" id="5MMI">
    <property type="method" value="EM"/>
    <property type="resolution" value="3.25 A"/>
    <property type="chains" value="M=1-271"/>
</dbReference>
<dbReference type="PDB" id="5MMM">
    <property type="method" value="EM"/>
    <property type="resolution" value="3.40 A"/>
    <property type="chains" value="M=1-271"/>
</dbReference>
<dbReference type="PDB" id="5X8P">
    <property type="method" value="EM"/>
    <property type="resolution" value="3.40 A"/>
    <property type="chains" value="M=80-271"/>
</dbReference>
<dbReference type="PDB" id="5X8T">
    <property type="method" value="EM"/>
    <property type="resolution" value="3.30 A"/>
    <property type="chains" value="M=80-271"/>
</dbReference>
<dbReference type="PDB" id="6ERI">
    <property type="method" value="EM"/>
    <property type="resolution" value="3.00 A"/>
    <property type="chains" value="AL=78-261"/>
</dbReference>
<dbReference type="PDBsum" id="4V61"/>
<dbReference type="PDBsum" id="5H1S"/>
<dbReference type="PDBsum" id="5MLC"/>
<dbReference type="PDBsum" id="5MMI"/>
<dbReference type="PDBsum" id="5MMM"/>
<dbReference type="PDBsum" id="5X8P"/>
<dbReference type="PDBsum" id="5X8T"/>
<dbReference type="PDBsum" id="6ERI"/>
<dbReference type="EMDB" id="EMD-3525"/>
<dbReference type="EMDB" id="EMD-3531"/>
<dbReference type="EMDB" id="EMD-3533"/>
<dbReference type="EMDB" id="EMD-3941"/>
<dbReference type="EMDB" id="EMD-6709"/>
<dbReference type="EMDB" id="EMD-6711"/>
<dbReference type="EMDB" id="EMD-9572"/>
<dbReference type="SMR" id="P22798"/>
<dbReference type="IntAct" id="P22798">
    <property type="interactions" value="1"/>
</dbReference>
<dbReference type="STRING" id="3562.P22798"/>
<dbReference type="OrthoDB" id="361383at2759"/>
<dbReference type="Proteomes" id="UP001155700">
    <property type="component" value="Unplaced"/>
</dbReference>
<dbReference type="GO" id="GO:0009507">
    <property type="term" value="C:chloroplast"/>
    <property type="evidence" value="ECO:0007669"/>
    <property type="project" value="UniProtKB-SubCell"/>
</dbReference>
<dbReference type="GO" id="GO:0022625">
    <property type="term" value="C:cytosolic large ribosomal subunit"/>
    <property type="evidence" value="ECO:0000318"/>
    <property type="project" value="GO_Central"/>
</dbReference>
<dbReference type="GO" id="GO:0003729">
    <property type="term" value="F:mRNA binding"/>
    <property type="evidence" value="ECO:0007669"/>
    <property type="project" value="UniProtKB-ARBA"/>
</dbReference>
<dbReference type="GO" id="GO:0003735">
    <property type="term" value="F:structural constituent of ribosome"/>
    <property type="evidence" value="ECO:0000318"/>
    <property type="project" value="GO_Central"/>
</dbReference>
<dbReference type="GO" id="GO:0006412">
    <property type="term" value="P:translation"/>
    <property type="evidence" value="ECO:0007669"/>
    <property type="project" value="InterPro"/>
</dbReference>
<dbReference type="Gene3D" id="3.100.10.10">
    <property type="match status" value="1"/>
</dbReference>
<dbReference type="HAMAP" id="MF_01341">
    <property type="entry name" value="Ribosomal_uL15"/>
    <property type="match status" value="1"/>
</dbReference>
<dbReference type="InterPro" id="IPR030878">
    <property type="entry name" value="Ribosomal_uL15"/>
</dbReference>
<dbReference type="InterPro" id="IPR021131">
    <property type="entry name" value="Ribosomal_uL15/eL18"/>
</dbReference>
<dbReference type="InterPro" id="IPR036227">
    <property type="entry name" value="Ribosomal_uL15/eL18_sf"/>
</dbReference>
<dbReference type="InterPro" id="IPR005749">
    <property type="entry name" value="Ribosomal_uL15_bac-type"/>
</dbReference>
<dbReference type="InterPro" id="IPR001196">
    <property type="entry name" value="Ribosomal_uL15_CS"/>
</dbReference>
<dbReference type="NCBIfam" id="TIGR01071">
    <property type="entry name" value="rplO_bact"/>
    <property type="match status" value="1"/>
</dbReference>
<dbReference type="PANTHER" id="PTHR12934">
    <property type="entry name" value="50S RIBOSOMAL PROTEIN L15"/>
    <property type="match status" value="1"/>
</dbReference>
<dbReference type="PANTHER" id="PTHR12934:SF11">
    <property type="entry name" value="LARGE RIBOSOMAL SUBUNIT PROTEIN UL15M"/>
    <property type="match status" value="1"/>
</dbReference>
<dbReference type="Pfam" id="PF00828">
    <property type="entry name" value="Ribosomal_L27A"/>
    <property type="match status" value="1"/>
</dbReference>
<dbReference type="SUPFAM" id="SSF52080">
    <property type="entry name" value="Ribosomal proteins L15p and L18e"/>
    <property type="match status" value="1"/>
</dbReference>
<dbReference type="PROSITE" id="PS00475">
    <property type="entry name" value="RIBOSOMAL_L15"/>
    <property type="match status" value="1"/>
</dbReference>
<proteinExistence type="evidence at protein level"/>